<evidence type="ECO:0000255" key="1">
    <source>
        <dbReference type="HAMAP-Rule" id="MF_00196"/>
    </source>
</evidence>
<accession>Q8Z2E0</accession>
<protein>
    <recommendedName>
        <fullName evidence="1">Mannitol-1-phosphate 5-dehydrogenase</fullName>
        <ecNumber evidence="1">1.1.1.17</ecNumber>
    </recommendedName>
</protein>
<name>MTLD_SALTI</name>
<gene>
    <name evidence="1" type="primary">mtlD</name>
    <name type="ordered locus">STY4110</name>
    <name type="ordered locus">t3833</name>
</gene>
<sequence length="382" mass="40870">MKALHFGAGNIGRGFIGKLLADAGIQLTFADVNQVVLDALNARHSYQVHVVGENEQVDTVSGVNAVSSIGDDVVDLIAHVDLITTAVGPVVLERIAPAIAKGLVKRKAQGVDAPLNIIACENMVRGTTQLKGHVMNALADGDKAWVEQHVGFVDSAVDRIVPPSASATNDPLEVTVETFSEWIVDKTQFKGALPNIPGMELTDNLMAFVERKLFTLNTGHAITAYLGKLAGHQTIRDAILDEGIRAVVKGAMEESGAVLIKRYGFDADKHAAYIQKILGRFENPYLKDDVERVGRQPLRKLSAGDRLIKPLLGTLEYGLPHVNLVKGIAAAMHFRSDEDPQAQELAALITEKGPQAALAQISGLDANSDVVAEAVNAYNATK</sequence>
<keyword id="KW-0520">NAD</keyword>
<keyword id="KW-0560">Oxidoreductase</keyword>
<reference key="1">
    <citation type="journal article" date="2001" name="Nature">
        <title>Complete genome sequence of a multiple drug resistant Salmonella enterica serovar Typhi CT18.</title>
        <authorList>
            <person name="Parkhill J."/>
            <person name="Dougan G."/>
            <person name="James K.D."/>
            <person name="Thomson N.R."/>
            <person name="Pickard D."/>
            <person name="Wain J."/>
            <person name="Churcher C.M."/>
            <person name="Mungall K.L."/>
            <person name="Bentley S.D."/>
            <person name="Holden M.T.G."/>
            <person name="Sebaihia M."/>
            <person name="Baker S."/>
            <person name="Basham D."/>
            <person name="Brooks K."/>
            <person name="Chillingworth T."/>
            <person name="Connerton P."/>
            <person name="Cronin A."/>
            <person name="Davis P."/>
            <person name="Davies R.M."/>
            <person name="Dowd L."/>
            <person name="White N."/>
            <person name="Farrar J."/>
            <person name="Feltwell T."/>
            <person name="Hamlin N."/>
            <person name="Haque A."/>
            <person name="Hien T.T."/>
            <person name="Holroyd S."/>
            <person name="Jagels K."/>
            <person name="Krogh A."/>
            <person name="Larsen T.S."/>
            <person name="Leather S."/>
            <person name="Moule S."/>
            <person name="O'Gaora P."/>
            <person name="Parry C."/>
            <person name="Quail M.A."/>
            <person name="Rutherford K.M."/>
            <person name="Simmonds M."/>
            <person name="Skelton J."/>
            <person name="Stevens K."/>
            <person name="Whitehead S."/>
            <person name="Barrell B.G."/>
        </authorList>
    </citation>
    <scope>NUCLEOTIDE SEQUENCE [LARGE SCALE GENOMIC DNA]</scope>
    <source>
        <strain>CT18</strain>
    </source>
</reference>
<reference key="2">
    <citation type="journal article" date="2003" name="J. Bacteriol.">
        <title>Comparative genomics of Salmonella enterica serovar Typhi strains Ty2 and CT18.</title>
        <authorList>
            <person name="Deng W."/>
            <person name="Liou S.-R."/>
            <person name="Plunkett G. III"/>
            <person name="Mayhew G.F."/>
            <person name="Rose D.J."/>
            <person name="Burland V."/>
            <person name="Kodoyianni V."/>
            <person name="Schwartz D.C."/>
            <person name="Blattner F.R."/>
        </authorList>
    </citation>
    <scope>NUCLEOTIDE SEQUENCE [LARGE SCALE GENOMIC DNA]</scope>
    <source>
        <strain>ATCC 700931 / Ty2</strain>
    </source>
</reference>
<proteinExistence type="inferred from homology"/>
<organism>
    <name type="scientific">Salmonella typhi</name>
    <dbReference type="NCBI Taxonomy" id="90370"/>
    <lineage>
        <taxon>Bacteria</taxon>
        <taxon>Pseudomonadati</taxon>
        <taxon>Pseudomonadota</taxon>
        <taxon>Gammaproteobacteria</taxon>
        <taxon>Enterobacterales</taxon>
        <taxon>Enterobacteriaceae</taxon>
        <taxon>Salmonella</taxon>
    </lineage>
</organism>
<comment type="catalytic activity">
    <reaction evidence="1">
        <text>D-mannitol 1-phosphate + NAD(+) = beta-D-fructose 6-phosphate + NADH + H(+)</text>
        <dbReference type="Rhea" id="RHEA:19661"/>
        <dbReference type="ChEBI" id="CHEBI:15378"/>
        <dbReference type="ChEBI" id="CHEBI:57540"/>
        <dbReference type="ChEBI" id="CHEBI:57634"/>
        <dbReference type="ChEBI" id="CHEBI:57945"/>
        <dbReference type="ChEBI" id="CHEBI:61381"/>
        <dbReference type="EC" id="1.1.1.17"/>
    </reaction>
</comment>
<comment type="similarity">
    <text evidence="1">Belongs to the mannitol dehydrogenase family.</text>
</comment>
<feature type="chain" id="PRO_0000170716" description="Mannitol-1-phosphate 5-dehydrogenase">
    <location>
        <begin position="1"/>
        <end position="382"/>
    </location>
</feature>
<feature type="binding site" evidence="1">
    <location>
        <begin position="3"/>
        <end position="14"/>
    </location>
    <ligand>
        <name>NAD(+)</name>
        <dbReference type="ChEBI" id="CHEBI:57540"/>
    </ligand>
</feature>
<dbReference type="EC" id="1.1.1.17" evidence="1"/>
<dbReference type="EMBL" id="AL513382">
    <property type="protein sequence ID" value="CAD03308.1"/>
    <property type="molecule type" value="Genomic_DNA"/>
</dbReference>
<dbReference type="EMBL" id="AE014613">
    <property type="protein sequence ID" value="AAO71314.1"/>
    <property type="molecule type" value="Genomic_DNA"/>
</dbReference>
<dbReference type="RefSeq" id="NP_458240.1">
    <property type="nucleotide sequence ID" value="NC_003198.1"/>
</dbReference>
<dbReference type="RefSeq" id="WP_000645390.1">
    <property type="nucleotide sequence ID" value="NZ_WSUR01000001.1"/>
</dbReference>
<dbReference type="SMR" id="Q8Z2E0"/>
<dbReference type="STRING" id="220341.gene:17587952"/>
<dbReference type="KEGG" id="stt:t3833"/>
<dbReference type="KEGG" id="sty:STY4110"/>
<dbReference type="PATRIC" id="fig|220341.7.peg.4197"/>
<dbReference type="eggNOG" id="COG0246">
    <property type="taxonomic scope" value="Bacteria"/>
</dbReference>
<dbReference type="HOGENOM" id="CLU_036089_2_0_6"/>
<dbReference type="OMA" id="APFIERK"/>
<dbReference type="OrthoDB" id="271711at2"/>
<dbReference type="Proteomes" id="UP000000541">
    <property type="component" value="Chromosome"/>
</dbReference>
<dbReference type="Proteomes" id="UP000002670">
    <property type="component" value="Chromosome"/>
</dbReference>
<dbReference type="GO" id="GO:0005829">
    <property type="term" value="C:cytosol"/>
    <property type="evidence" value="ECO:0007669"/>
    <property type="project" value="TreeGrafter"/>
</dbReference>
<dbReference type="GO" id="GO:0008926">
    <property type="term" value="F:mannitol-1-phosphate 5-dehydrogenase activity"/>
    <property type="evidence" value="ECO:0007669"/>
    <property type="project" value="UniProtKB-UniRule"/>
</dbReference>
<dbReference type="GO" id="GO:0019592">
    <property type="term" value="P:mannitol catabolic process"/>
    <property type="evidence" value="ECO:0007669"/>
    <property type="project" value="TreeGrafter"/>
</dbReference>
<dbReference type="FunFam" id="1.10.1040.10:FF:000009">
    <property type="entry name" value="Mannitol-1-phosphate 5-dehydrogenase"/>
    <property type="match status" value="1"/>
</dbReference>
<dbReference type="FunFam" id="3.40.50.720:FF:000075">
    <property type="entry name" value="Mannitol-1-phosphate 5-dehydrogenase"/>
    <property type="match status" value="1"/>
</dbReference>
<dbReference type="Gene3D" id="1.10.1040.10">
    <property type="entry name" value="N-(1-d-carboxylethyl)-l-norvaline Dehydrogenase, domain 2"/>
    <property type="match status" value="1"/>
</dbReference>
<dbReference type="Gene3D" id="3.40.50.720">
    <property type="entry name" value="NAD(P)-binding Rossmann-like Domain"/>
    <property type="match status" value="1"/>
</dbReference>
<dbReference type="HAMAP" id="MF_00196">
    <property type="entry name" value="Mannitol_dehydrog"/>
    <property type="match status" value="1"/>
</dbReference>
<dbReference type="InterPro" id="IPR008927">
    <property type="entry name" value="6-PGluconate_DH-like_C_sf"/>
</dbReference>
<dbReference type="InterPro" id="IPR013328">
    <property type="entry name" value="6PGD_dom2"/>
</dbReference>
<dbReference type="InterPro" id="IPR023028">
    <property type="entry name" value="Mannitol_1_phos_5_DH"/>
</dbReference>
<dbReference type="InterPro" id="IPR000669">
    <property type="entry name" value="Mannitol_DH"/>
</dbReference>
<dbReference type="InterPro" id="IPR013118">
    <property type="entry name" value="Mannitol_DH_C"/>
</dbReference>
<dbReference type="InterPro" id="IPR023027">
    <property type="entry name" value="Mannitol_DH_CS"/>
</dbReference>
<dbReference type="InterPro" id="IPR013131">
    <property type="entry name" value="Mannitol_DH_N"/>
</dbReference>
<dbReference type="InterPro" id="IPR036291">
    <property type="entry name" value="NAD(P)-bd_dom_sf"/>
</dbReference>
<dbReference type="NCBIfam" id="NF002646">
    <property type="entry name" value="PRK02318.1-2"/>
    <property type="match status" value="1"/>
</dbReference>
<dbReference type="NCBIfam" id="NF002647">
    <property type="entry name" value="PRK02318.1-3"/>
    <property type="match status" value="1"/>
</dbReference>
<dbReference type="NCBIfam" id="NF002648">
    <property type="entry name" value="PRK02318.1-4"/>
    <property type="match status" value="1"/>
</dbReference>
<dbReference type="NCBIfam" id="NF002650">
    <property type="entry name" value="PRK02318.2-2"/>
    <property type="match status" value="1"/>
</dbReference>
<dbReference type="NCBIfam" id="NF002652">
    <property type="entry name" value="PRK02318.2-5"/>
    <property type="match status" value="1"/>
</dbReference>
<dbReference type="PANTHER" id="PTHR30524:SF0">
    <property type="entry name" value="ALTRONATE OXIDOREDUCTASE-RELATED"/>
    <property type="match status" value="1"/>
</dbReference>
<dbReference type="PANTHER" id="PTHR30524">
    <property type="entry name" value="MANNITOL-1-PHOSPHATE 5-DEHYDROGENASE"/>
    <property type="match status" value="1"/>
</dbReference>
<dbReference type="Pfam" id="PF01232">
    <property type="entry name" value="Mannitol_dh"/>
    <property type="match status" value="1"/>
</dbReference>
<dbReference type="Pfam" id="PF08125">
    <property type="entry name" value="Mannitol_dh_C"/>
    <property type="match status" value="1"/>
</dbReference>
<dbReference type="PRINTS" id="PR00084">
    <property type="entry name" value="MTLDHDRGNASE"/>
</dbReference>
<dbReference type="SUPFAM" id="SSF48179">
    <property type="entry name" value="6-phosphogluconate dehydrogenase C-terminal domain-like"/>
    <property type="match status" value="1"/>
</dbReference>
<dbReference type="SUPFAM" id="SSF51735">
    <property type="entry name" value="NAD(P)-binding Rossmann-fold domains"/>
    <property type="match status" value="1"/>
</dbReference>
<dbReference type="PROSITE" id="PS00974">
    <property type="entry name" value="MANNITOL_DHGENASE"/>
    <property type="match status" value="1"/>
</dbReference>